<keyword id="KW-0548">Nucleotidyltransferase</keyword>
<keyword id="KW-0808">Transferase</keyword>
<dbReference type="EC" id="2.7.7.61" evidence="1"/>
<dbReference type="EMBL" id="CP000627">
    <property type="protein sequence ID" value="ABQ20796.1"/>
    <property type="molecule type" value="Genomic_DNA"/>
</dbReference>
<dbReference type="EMBL" id="CP001235">
    <property type="protein sequence ID" value="ACP08834.1"/>
    <property type="molecule type" value="Genomic_DNA"/>
</dbReference>
<dbReference type="RefSeq" id="WP_000018079.1">
    <property type="nucleotide sequence ID" value="NZ_JAACZH010000017.1"/>
</dbReference>
<dbReference type="SMR" id="A5F3C5"/>
<dbReference type="KEGG" id="vco:VC0395_A0327"/>
<dbReference type="KEGG" id="vcr:VC395_0817"/>
<dbReference type="PATRIC" id="fig|345073.21.peg.789"/>
<dbReference type="eggNOG" id="COG3697">
    <property type="taxonomic scope" value="Bacteria"/>
</dbReference>
<dbReference type="HOGENOM" id="CLU_104529_1_0_6"/>
<dbReference type="OrthoDB" id="3196716at2"/>
<dbReference type="Proteomes" id="UP000000249">
    <property type="component" value="Chromosome 2"/>
</dbReference>
<dbReference type="GO" id="GO:0050519">
    <property type="term" value="F:holo-citrate lyase synthase activity"/>
    <property type="evidence" value="ECO:0007669"/>
    <property type="project" value="UniProtKB-UniRule"/>
</dbReference>
<dbReference type="GO" id="GO:0051191">
    <property type="term" value="P:prosthetic group biosynthetic process"/>
    <property type="evidence" value="ECO:0007669"/>
    <property type="project" value="InterPro"/>
</dbReference>
<dbReference type="HAMAP" id="MF_00398">
    <property type="entry name" value="CitX"/>
    <property type="match status" value="1"/>
</dbReference>
<dbReference type="InterPro" id="IPR005551">
    <property type="entry name" value="CitX"/>
</dbReference>
<dbReference type="NCBIfam" id="TIGR03124">
    <property type="entry name" value="citrate_citX"/>
    <property type="match status" value="1"/>
</dbReference>
<dbReference type="NCBIfam" id="NF002383">
    <property type="entry name" value="PRK01392.1"/>
    <property type="match status" value="1"/>
</dbReference>
<dbReference type="Pfam" id="PF03802">
    <property type="entry name" value="CitX"/>
    <property type="match status" value="1"/>
</dbReference>
<protein>
    <recommendedName>
        <fullName evidence="1">Probable apo-citrate lyase phosphoribosyl-dephospho-CoA transferase</fullName>
        <ecNumber evidence="1">2.7.7.61</ecNumber>
    </recommendedName>
    <alternativeName>
        <fullName evidence="1">Apo-ACP nucleodityltransferase</fullName>
    </alternativeName>
    <alternativeName>
        <fullName evidence="1">Holo-ACP synthase</fullName>
    </alternativeName>
    <alternativeName>
        <fullName evidence="1">Holo-citrate lyase synthase</fullName>
    </alternativeName>
</protein>
<comment type="function">
    <text evidence="1">Transfers 2-(5''-triphosphoribosyl)-3'-dephosphocoenzyme-A on a serine residue to the apo-acyl carrier protein (gamma chain) of the citrate lyase to yield holo-acyl carrier protein.</text>
</comment>
<comment type="catalytic activity">
    <reaction evidence="1">
        <text>apo-[citrate lyase ACP] + 2'-(5''-triphospho-alpha-D-ribosyl)-3'-dephospho-CoA = holo-[citrate lyase ACP] + diphosphate</text>
        <dbReference type="Rhea" id="RHEA:16333"/>
        <dbReference type="Rhea" id="RHEA-COMP:10157"/>
        <dbReference type="Rhea" id="RHEA-COMP:10158"/>
        <dbReference type="ChEBI" id="CHEBI:29999"/>
        <dbReference type="ChEBI" id="CHEBI:33019"/>
        <dbReference type="ChEBI" id="CHEBI:61378"/>
        <dbReference type="ChEBI" id="CHEBI:82683"/>
        <dbReference type="EC" id="2.7.7.61"/>
    </reaction>
</comment>
<comment type="similarity">
    <text evidence="1">Belongs to the CitX family.</text>
</comment>
<evidence type="ECO:0000255" key="1">
    <source>
        <dbReference type="HAMAP-Rule" id="MF_00398"/>
    </source>
</evidence>
<reference key="1">
    <citation type="submission" date="2007-03" db="EMBL/GenBank/DDBJ databases">
        <authorList>
            <person name="Heidelberg J."/>
        </authorList>
    </citation>
    <scope>NUCLEOTIDE SEQUENCE [LARGE SCALE GENOMIC DNA]</scope>
    <source>
        <strain>ATCC 39541 / Classical Ogawa 395 / O395</strain>
    </source>
</reference>
<reference key="2">
    <citation type="journal article" date="2008" name="PLoS ONE">
        <title>A recalibrated molecular clock and independent origins for the cholera pandemic clones.</title>
        <authorList>
            <person name="Feng L."/>
            <person name="Reeves P.R."/>
            <person name="Lan R."/>
            <person name="Ren Y."/>
            <person name="Gao C."/>
            <person name="Zhou Z."/>
            <person name="Ren Y."/>
            <person name="Cheng J."/>
            <person name="Wang W."/>
            <person name="Wang J."/>
            <person name="Qian W."/>
            <person name="Li D."/>
            <person name="Wang L."/>
        </authorList>
    </citation>
    <scope>NUCLEOTIDE SEQUENCE [LARGE SCALE GENOMIC DNA]</scope>
    <source>
        <strain>ATCC 39541 / Classical Ogawa 395 / O395</strain>
    </source>
</reference>
<feature type="chain" id="PRO_1000072237" description="Probable apo-citrate lyase phosphoribosyl-dephospho-CoA transferase">
    <location>
        <begin position="1"/>
        <end position="178"/>
    </location>
</feature>
<name>CITX_VIBC3</name>
<accession>A5F3C5</accession>
<accession>C3LYG8</accession>
<sequence>MSHHPDLSVSLDQLLLRKEVRVRQQGEWLKRHSLPLVSFTVNMPGAFKLNAASQTVMDAGMRAIQELCQKTGWRQVACQLLVEKTGPEAFVVIQAPSASMLKKAMMKIEREHPLGRLMDLDVIDVDGHIISRQGAQLPRRRCLLCERDAVICARSRRHSVEALLAKIEEMTHDYSCCA</sequence>
<gene>
    <name evidence="1" type="primary">citX</name>
    <name type="ordered locus">VC0395_A0327</name>
    <name type="ordered locus">VC395_0817</name>
</gene>
<organism>
    <name type="scientific">Vibrio cholerae serotype O1 (strain ATCC 39541 / Classical Ogawa 395 / O395)</name>
    <dbReference type="NCBI Taxonomy" id="345073"/>
    <lineage>
        <taxon>Bacteria</taxon>
        <taxon>Pseudomonadati</taxon>
        <taxon>Pseudomonadota</taxon>
        <taxon>Gammaproteobacteria</taxon>
        <taxon>Vibrionales</taxon>
        <taxon>Vibrionaceae</taxon>
        <taxon>Vibrio</taxon>
    </lineage>
</organism>
<proteinExistence type="inferred from homology"/>